<reference key="1">
    <citation type="journal article" date="2004" name="Proc. Natl. Acad. Sci. U.S.A.">
        <title>The complete genomic sequence of Nocardia farcinica IFM 10152.</title>
        <authorList>
            <person name="Ishikawa J."/>
            <person name="Yamashita A."/>
            <person name="Mikami Y."/>
            <person name="Hoshino Y."/>
            <person name="Kurita H."/>
            <person name="Hotta K."/>
            <person name="Shiba T."/>
            <person name="Hattori M."/>
        </authorList>
    </citation>
    <scope>NUCLEOTIDE SEQUENCE [LARGE SCALE GENOMIC DNA]</scope>
    <source>
        <strain>IFM 10152</strain>
    </source>
</reference>
<organism>
    <name type="scientific">Nocardia farcinica (strain IFM 10152)</name>
    <dbReference type="NCBI Taxonomy" id="247156"/>
    <lineage>
        <taxon>Bacteria</taxon>
        <taxon>Bacillati</taxon>
        <taxon>Actinomycetota</taxon>
        <taxon>Actinomycetes</taxon>
        <taxon>Mycobacteriales</taxon>
        <taxon>Nocardiaceae</taxon>
        <taxon>Nocardia</taxon>
    </lineage>
</organism>
<evidence type="ECO:0000255" key="1">
    <source>
        <dbReference type="HAMAP-Rule" id="MF_01615"/>
    </source>
</evidence>
<evidence type="ECO:0000305" key="2"/>
<keyword id="KW-0315">Glutamine amidotransferase</keyword>
<keyword id="KW-0378">Hydrolase</keyword>
<keyword id="KW-0456">Lyase</keyword>
<keyword id="KW-0663">Pyridoxal phosphate</keyword>
<keyword id="KW-1185">Reference proteome</keyword>
<gene>
    <name evidence="1" type="primary">pdxT</name>
    <name type="ordered locus">NFA_37030</name>
</gene>
<accession>Q5YTE0</accession>
<comment type="function">
    <text evidence="1">Catalyzes the hydrolysis of glutamine to glutamate and ammonia as part of the biosynthesis of pyridoxal 5'-phosphate. The resulting ammonia molecule is channeled to the active site of PdxS.</text>
</comment>
<comment type="catalytic activity">
    <reaction evidence="1">
        <text>aldehydo-D-ribose 5-phosphate + D-glyceraldehyde 3-phosphate + L-glutamine = pyridoxal 5'-phosphate + L-glutamate + phosphate + 3 H2O + H(+)</text>
        <dbReference type="Rhea" id="RHEA:31507"/>
        <dbReference type="ChEBI" id="CHEBI:15377"/>
        <dbReference type="ChEBI" id="CHEBI:15378"/>
        <dbReference type="ChEBI" id="CHEBI:29985"/>
        <dbReference type="ChEBI" id="CHEBI:43474"/>
        <dbReference type="ChEBI" id="CHEBI:58273"/>
        <dbReference type="ChEBI" id="CHEBI:58359"/>
        <dbReference type="ChEBI" id="CHEBI:59776"/>
        <dbReference type="ChEBI" id="CHEBI:597326"/>
        <dbReference type="EC" id="4.3.3.6"/>
    </reaction>
</comment>
<comment type="catalytic activity">
    <reaction evidence="1">
        <text>L-glutamine + H2O = L-glutamate + NH4(+)</text>
        <dbReference type="Rhea" id="RHEA:15889"/>
        <dbReference type="ChEBI" id="CHEBI:15377"/>
        <dbReference type="ChEBI" id="CHEBI:28938"/>
        <dbReference type="ChEBI" id="CHEBI:29985"/>
        <dbReference type="ChEBI" id="CHEBI:58359"/>
        <dbReference type="EC" id="3.5.1.2"/>
    </reaction>
</comment>
<comment type="pathway">
    <text evidence="1">Cofactor biosynthesis; pyridoxal 5'-phosphate biosynthesis.</text>
</comment>
<comment type="subunit">
    <text evidence="1">In the presence of PdxS, forms a dodecamer of heterodimers. Only shows activity in the heterodimer.</text>
</comment>
<comment type="similarity">
    <text evidence="1">Belongs to the glutaminase PdxT/SNO family.</text>
</comment>
<comment type="sequence caution" evidence="2">
    <conflict type="erroneous initiation">
        <sequence resource="EMBL-CDS" id="BAD58551"/>
    </conflict>
</comment>
<dbReference type="EC" id="4.3.3.6" evidence="1"/>
<dbReference type="EC" id="3.5.1.2" evidence="1"/>
<dbReference type="EMBL" id="AP006618">
    <property type="protein sequence ID" value="BAD58551.1"/>
    <property type="status" value="ALT_INIT"/>
    <property type="molecule type" value="Genomic_DNA"/>
</dbReference>
<dbReference type="SMR" id="Q5YTE0"/>
<dbReference type="STRING" id="247156.NFA_37030"/>
<dbReference type="MEROPS" id="C26.A32"/>
<dbReference type="KEGG" id="nfa:NFA_37030"/>
<dbReference type="eggNOG" id="COG0311">
    <property type="taxonomic scope" value="Bacteria"/>
</dbReference>
<dbReference type="HOGENOM" id="CLU_069674_2_0_11"/>
<dbReference type="UniPathway" id="UPA00245"/>
<dbReference type="Proteomes" id="UP000006820">
    <property type="component" value="Chromosome"/>
</dbReference>
<dbReference type="GO" id="GO:0005829">
    <property type="term" value="C:cytosol"/>
    <property type="evidence" value="ECO:0007669"/>
    <property type="project" value="TreeGrafter"/>
</dbReference>
<dbReference type="GO" id="GO:1903600">
    <property type="term" value="C:glutaminase complex"/>
    <property type="evidence" value="ECO:0007669"/>
    <property type="project" value="TreeGrafter"/>
</dbReference>
<dbReference type="GO" id="GO:0004359">
    <property type="term" value="F:glutaminase activity"/>
    <property type="evidence" value="ECO:0007669"/>
    <property type="project" value="UniProtKB-UniRule"/>
</dbReference>
<dbReference type="GO" id="GO:0036381">
    <property type="term" value="F:pyridoxal 5'-phosphate synthase (glutamine hydrolysing) activity"/>
    <property type="evidence" value="ECO:0007669"/>
    <property type="project" value="UniProtKB-UniRule"/>
</dbReference>
<dbReference type="GO" id="GO:0006543">
    <property type="term" value="P:glutamine catabolic process"/>
    <property type="evidence" value="ECO:0007669"/>
    <property type="project" value="UniProtKB-UniRule"/>
</dbReference>
<dbReference type="GO" id="GO:0042823">
    <property type="term" value="P:pyridoxal phosphate biosynthetic process"/>
    <property type="evidence" value="ECO:0007669"/>
    <property type="project" value="UniProtKB-UniRule"/>
</dbReference>
<dbReference type="GO" id="GO:0008614">
    <property type="term" value="P:pyridoxine metabolic process"/>
    <property type="evidence" value="ECO:0007669"/>
    <property type="project" value="TreeGrafter"/>
</dbReference>
<dbReference type="CDD" id="cd01749">
    <property type="entry name" value="GATase1_PB"/>
    <property type="match status" value="1"/>
</dbReference>
<dbReference type="FunFam" id="3.40.50.880:FF:000010">
    <property type="entry name" value="uncharacterized protein LOC100176842 isoform X2"/>
    <property type="match status" value="1"/>
</dbReference>
<dbReference type="Gene3D" id="3.40.50.880">
    <property type="match status" value="1"/>
</dbReference>
<dbReference type="HAMAP" id="MF_01615">
    <property type="entry name" value="PdxT"/>
    <property type="match status" value="1"/>
</dbReference>
<dbReference type="InterPro" id="IPR029062">
    <property type="entry name" value="Class_I_gatase-like"/>
</dbReference>
<dbReference type="InterPro" id="IPR002161">
    <property type="entry name" value="PdxT/SNO"/>
</dbReference>
<dbReference type="InterPro" id="IPR021196">
    <property type="entry name" value="PdxT/SNO_CS"/>
</dbReference>
<dbReference type="NCBIfam" id="TIGR03800">
    <property type="entry name" value="PLP_synth_Pdx2"/>
    <property type="match status" value="1"/>
</dbReference>
<dbReference type="PANTHER" id="PTHR31559">
    <property type="entry name" value="PYRIDOXAL 5'-PHOSPHATE SYNTHASE SUBUNIT SNO"/>
    <property type="match status" value="1"/>
</dbReference>
<dbReference type="PANTHER" id="PTHR31559:SF0">
    <property type="entry name" value="PYRIDOXAL 5'-PHOSPHATE SYNTHASE SUBUNIT SNO1-RELATED"/>
    <property type="match status" value="1"/>
</dbReference>
<dbReference type="Pfam" id="PF01174">
    <property type="entry name" value="SNO"/>
    <property type="match status" value="1"/>
</dbReference>
<dbReference type="PIRSF" id="PIRSF005639">
    <property type="entry name" value="Glut_amidoT_SNO"/>
    <property type="match status" value="1"/>
</dbReference>
<dbReference type="SUPFAM" id="SSF52317">
    <property type="entry name" value="Class I glutamine amidotransferase-like"/>
    <property type="match status" value="1"/>
</dbReference>
<dbReference type="PROSITE" id="PS01236">
    <property type="entry name" value="PDXT_SNO_1"/>
    <property type="match status" value="1"/>
</dbReference>
<dbReference type="PROSITE" id="PS51130">
    <property type="entry name" value="PDXT_SNO_2"/>
    <property type="match status" value="1"/>
</dbReference>
<proteinExistence type="inferred from homology"/>
<feature type="chain" id="PRO_0000135650" description="Pyridoxal 5'-phosphate synthase subunit PdxT">
    <location>
        <begin position="1"/>
        <end position="226"/>
    </location>
</feature>
<feature type="active site" description="Nucleophile" evidence="1">
    <location>
        <position position="92"/>
    </location>
</feature>
<feature type="active site" description="Charge relay system" evidence="1">
    <location>
        <position position="191"/>
    </location>
</feature>
<feature type="active site" description="Charge relay system" evidence="1">
    <location>
        <position position="193"/>
    </location>
</feature>
<feature type="binding site" evidence="1">
    <location>
        <begin position="60"/>
        <end position="62"/>
    </location>
    <ligand>
        <name>L-glutamine</name>
        <dbReference type="ChEBI" id="CHEBI:58359"/>
    </ligand>
</feature>
<feature type="binding site" evidence="1">
    <location>
        <position position="121"/>
    </location>
    <ligand>
        <name>L-glutamine</name>
        <dbReference type="ChEBI" id="CHEBI:58359"/>
    </ligand>
</feature>
<feature type="binding site" evidence="1">
    <location>
        <begin position="150"/>
        <end position="151"/>
    </location>
    <ligand>
        <name>L-glutamine</name>
        <dbReference type="ChEBI" id="CHEBI:58359"/>
    </ligand>
</feature>
<protein>
    <recommendedName>
        <fullName evidence="1">Pyridoxal 5'-phosphate synthase subunit PdxT</fullName>
        <ecNumber evidence="1">4.3.3.6</ecNumber>
    </recommendedName>
    <alternativeName>
        <fullName evidence="1">Pdx2</fullName>
    </alternativeName>
    <alternativeName>
        <fullName evidence="1">Pyridoxal 5'-phosphate synthase glutaminase subunit</fullName>
        <ecNumber evidence="1">3.5.1.2</ecNumber>
    </alternativeName>
</protein>
<name>PDXT_NOCFA</name>
<sequence length="226" mass="23992">MSAPAAEPQAAPSRPTIGVLALQGDVREHLAALRACGAEPVLVRRVGELEAVDGLVLPGGESTAISKLLQVFDLLDPLRARLRDGMPAFGSCAGMILLASEVLDTRPDAQHLSGIDMTVRRNAFGRQVDSFETDLDFAGLDDGPVRAVFIRAPWVERAGDGVQVLATVPDGPSRGRIVAVRQGNVLATSFHPEVTGDLRVHRMFVDIVRAAGDRAGNVHTPDVQPT</sequence>